<protein>
    <recommendedName>
        <fullName evidence="1">Large ribosomal subunit protein bL36</fullName>
    </recommendedName>
    <alternativeName>
        <fullName evidence="2">50S ribosomal protein L36</fullName>
    </alternativeName>
</protein>
<name>RL36_SYNWW</name>
<evidence type="ECO:0000255" key="1">
    <source>
        <dbReference type="HAMAP-Rule" id="MF_00251"/>
    </source>
</evidence>
<evidence type="ECO:0000305" key="2"/>
<dbReference type="EMBL" id="CP000448">
    <property type="protein sequence ID" value="ABI69599.1"/>
    <property type="molecule type" value="Genomic_DNA"/>
</dbReference>
<dbReference type="RefSeq" id="WP_011641683.1">
    <property type="nucleotide sequence ID" value="NC_008346.1"/>
</dbReference>
<dbReference type="SMR" id="Q0AUK5"/>
<dbReference type="STRING" id="335541.Swol_2308"/>
<dbReference type="KEGG" id="swo:Swol_2308"/>
<dbReference type="eggNOG" id="COG0257">
    <property type="taxonomic scope" value="Bacteria"/>
</dbReference>
<dbReference type="HOGENOM" id="CLU_135723_6_2_9"/>
<dbReference type="OrthoDB" id="9802520at2"/>
<dbReference type="Proteomes" id="UP000001968">
    <property type="component" value="Chromosome"/>
</dbReference>
<dbReference type="GO" id="GO:0005737">
    <property type="term" value="C:cytoplasm"/>
    <property type="evidence" value="ECO:0007669"/>
    <property type="project" value="UniProtKB-ARBA"/>
</dbReference>
<dbReference type="GO" id="GO:1990904">
    <property type="term" value="C:ribonucleoprotein complex"/>
    <property type="evidence" value="ECO:0007669"/>
    <property type="project" value="UniProtKB-KW"/>
</dbReference>
<dbReference type="GO" id="GO:0005840">
    <property type="term" value="C:ribosome"/>
    <property type="evidence" value="ECO:0007669"/>
    <property type="project" value="UniProtKB-KW"/>
</dbReference>
<dbReference type="GO" id="GO:0003735">
    <property type="term" value="F:structural constituent of ribosome"/>
    <property type="evidence" value="ECO:0007669"/>
    <property type="project" value="InterPro"/>
</dbReference>
<dbReference type="GO" id="GO:0006412">
    <property type="term" value="P:translation"/>
    <property type="evidence" value="ECO:0007669"/>
    <property type="project" value="UniProtKB-UniRule"/>
</dbReference>
<dbReference type="HAMAP" id="MF_00251">
    <property type="entry name" value="Ribosomal_bL36"/>
    <property type="match status" value="1"/>
</dbReference>
<dbReference type="InterPro" id="IPR000473">
    <property type="entry name" value="Ribosomal_bL36"/>
</dbReference>
<dbReference type="InterPro" id="IPR035977">
    <property type="entry name" value="Ribosomal_bL36_sp"/>
</dbReference>
<dbReference type="NCBIfam" id="TIGR01022">
    <property type="entry name" value="rpmJ_bact"/>
    <property type="match status" value="1"/>
</dbReference>
<dbReference type="PANTHER" id="PTHR42888">
    <property type="entry name" value="50S RIBOSOMAL PROTEIN L36, CHLOROPLASTIC"/>
    <property type="match status" value="1"/>
</dbReference>
<dbReference type="PANTHER" id="PTHR42888:SF1">
    <property type="entry name" value="LARGE RIBOSOMAL SUBUNIT PROTEIN BL36C"/>
    <property type="match status" value="1"/>
</dbReference>
<dbReference type="Pfam" id="PF00444">
    <property type="entry name" value="Ribosomal_L36"/>
    <property type="match status" value="1"/>
</dbReference>
<dbReference type="SUPFAM" id="SSF57840">
    <property type="entry name" value="Ribosomal protein L36"/>
    <property type="match status" value="1"/>
</dbReference>
<dbReference type="PROSITE" id="PS00828">
    <property type="entry name" value="RIBOSOMAL_L36"/>
    <property type="match status" value="1"/>
</dbReference>
<keyword id="KW-1185">Reference proteome</keyword>
<keyword id="KW-0687">Ribonucleoprotein</keyword>
<keyword id="KW-0689">Ribosomal protein</keyword>
<organism>
    <name type="scientific">Syntrophomonas wolfei subsp. wolfei (strain DSM 2245B / Goettingen)</name>
    <dbReference type="NCBI Taxonomy" id="335541"/>
    <lineage>
        <taxon>Bacteria</taxon>
        <taxon>Bacillati</taxon>
        <taxon>Bacillota</taxon>
        <taxon>Clostridia</taxon>
        <taxon>Eubacteriales</taxon>
        <taxon>Syntrophomonadaceae</taxon>
        <taxon>Syntrophomonas</taxon>
    </lineage>
</organism>
<reference key="1">
    <citation type="journal article" date="2010" name="Environ. Microbiol.">
        <title>The genome of Syntrophomonas wolfei: new insights into syntrophic metabolism and biohydrogen production.</title>
        <authorList>
            <person name="Sieber J.R."/>
            <person name="Sims D.R."/>
            <person name="Han C."/>
            <person name="Kim E."/>
            <person name="Lykidis A."/>
            <person name="Lapidus A.L."/>
            <person name="McDonnald E."/>
            <person name="Rohlin L."/>
            <person name="Culley D.E."/>
            <person name="Gunsalus R."/>
            <person name="McInerney M.J."/>
        </authorList>
    </citation>
    <scope>NUCLEOTIDE SEQUENCE [LARGE SCALE GENOMIC DNA]</scope>
    <source>
        <strain>DSM 2245B / Goettingen</strain>
    </source>
</reference>
<feature type="chain" id="PRO_0000302324" description="Large ribosomal subunit protein bL36">
    <location>
        <begin position="1"/>
        <end position="37"/>
    </location>
</feature>
<accession>Q0AUK5</accession>
<gene>
    <name evidence="1" type="primary">rpmJ</name>
    <name type="ordered locus">Swol_2308</name>
</gene>
<proteinExistence type="inferred from homology"/>
<sequence length="37" mass="4234">MKVKPSVKPICEKCKIIKRKGKVMVICENPKHKQVQG</sequence>
<comment type="similarity">
    <text evidence="1">Belongs to the bacterial ribosomal protein bL36 family.</text>
</comment>